<accession>P60182</accession>
<accession>Q8SPF1</accession>
<protein>
    <recommendedName>
        <fullName>Cytochrome c oxidase subunit 8A, mitochondrial</fullName>
    </recommendedName>
    <alternativeName>
        <fullName>Cytochrome c oxidase polypeptide VIII-liver/heart</fullName>
    </alternativeName>
    <alternativeName>
        <fullName>Cytochrome c oxidase subunit 8-2</fullName>
    </alternativeName>
</protein>
<name>COX8A_PANTR</name>
<dbReference type="EMBL" id="AB072323">
    <property type="protein sequence ID" value="BAB86876.1"/>
    <property type="molecule type" value="Genomic_DNA"/>
</dbReference>
<dbReference type="RefSeq" id="NP_001073394.1">
    <property type="nucleotide sequence ID" value="NM_001079925.1"/>
</dbReference>
<dbReference type="SMR" id="P60182"/>
<dbReference type="FunCoup" id="P60182">
    <property type="interactions" value="380"/>
</dbReference>
<dbReference type="STRING" id="9598.ENSPTRP00000006561"/>
<dbReference type="PaxDb" id="9598-ENSPTRP00000006561"/>
<dbReference type="Ensembl" id="ENSPTRT00000007112.3">
    <property type="protein sequence ID" value="ENSPTRP00000006561.2"/>
    <property type="gene ID" value="ENSPTRG00000003816.3"/>
</dbReference>
<dbReference type="GeneID" id="742828"/>
<dbReference type="KEGG" id="ptr:742828"/>
<dbReference type="CTD" id="1351"/>
<dbReference type="eggNOG" id="ENOG502SA62">
    <property type="taxonomic scope" value="Eukaryota"/>
</dbReference>
<dbReference type="GeneTree" id="ENSGT00390000006255"/>
<dbReference type="HOGENOM" id="CLU_203368_0_0_1"/>
<dbReference type="InParanoid" id="P60182"/>
<dbReference type="OMA" id="AQVHSMP"/>
<dbReference type="OrthoDB" id="2219at9604"/>
<dbReference type="TreeFam" id="TF105070"/>
<dbReference type="UniPathway" id="UPA00705"/>
<dbReference type="Proteomes" id="UP000002277">
    <property type="component" value="Chromosome 11"/>
</dbReference>
<dbReference type="Bgee" id="ENSPTRG00000003816">
    <property type="expression patterns" value="Expressed in cerebellar cortex and 21 other cell types or tissues"/>
</dbReference>
<dbReference type="GO" id="GO:0005743">
    <property type="term" value="C:mitochondrial inner membrane"/>
    <property type="evidence" value="ECO:0007669"/>
    <property type="project" value="UniProtKB-SubCell"/>
</dbReference>
<dbReference type="GO" id="GO:0005739">
    <property type="term" value="C:mitochondrion"/>
    <property type="evidence" value="ECO:0000318"/>
    <property type="project" value="GO_Central"/>
</dbReference>
<dbReference type="GO" id="GO:0045277">
    <property type="term" value="C:respiratory chain complex IV"/>
    <property type="evidence" value="ECO:0000318"/>
    <property type="project" value="GO_Central"/>
</dbReference>
<dbReference type="GO" id="GO:0006123">
    <property type="term" value="P:mitochondrial electron transport, cytochrome c to oxygen"/>
    <property type="evidence" value="ECO:0007669"/>
    <property type="project" value="InterPro"/>
</dbReference>
<dbReference type="CDD" id="cd00930">
    <property type="entry name" value="Cyt_c_Oxidase_VIII"/>
    <property type="match status" value="1"/>
</dbReference>
<dbReference type="FunFam" id="4.10.81.10:FF:000001">
    <property type="entry name" value="Cytochrome c oxidase subunit 8B, mitochondrial"/>
    <property type="match status" value="1"/>
</dbReference>
<dbReference type="Gene3D" id="4.10.81.10">
    <property type="entry name" value="Cytochrome c oxidase, subunit 8"/>
    <property type="match status" value="1"/>
</dbReference>
<dbReference type="InterPro" id="IPR003205">
    <property type="entry name" value="Cyt_c_oxidase_su8"/>
</dbReference>
<dbReference type="InterPro" id="IPR036548">
    <property type="entry name" value="Cyt_c_oxidase_su8_sf"/>
</dbReference>
<dbReference type="PANTHER" id="PTHR16717">
    <property type="entry name" value="CYTOCHROME C OXIDASE POLYPEPTIDE VIII"/>
    <property type="match status" value="1"/>
</dbReference>
<dbReference type="PANTHER" id="PTHR16717:SF1">
    <property type="entry name" value="CYTOCHROME C OXIDASE SUBUNIT 8A, MITOCHONDRIAL"/>
    <property type="match status" value="1"/>
</dbReference>
<dbReference type="Pfam" id="PF02285">
    <property type="entry name" value="COX8"/>
    <property type="match status" value="1"/>
</dbReference>
<dbReference type="SUPFAM" id="SSF81431">
    <property type="entry name" value="Mitochondrial cytochrome c oxidase subunit VIIIb (aka IX)"/>
    <property type="match status" value="1"/>
</dbReference>
<feature type="transit peptide" description="Mitochondrion" evidence="2">
    <location>
        <begin position="1"/>
        <end position="25"/>
    </location>
</feature>
<feature type="chain" id="PRO_0000006192" description="Cytochrome c oxidase subunit 8A, mitochondrial">
    <location>
        <begin position="26"/>
        <end position="69"/>
    </location>
</feature>
<feature type="topological domain" description="Mitochondrial matrix" evidence="2">
    <location>
        <begin position="26"/>
        <end position="36"/>
    </location>
</feature>
<feature type="transmembrane region" description="Helical" evidence="1">
    <location>
        <begin position="37"/>
        <end position="60"/>
    </location>
</feature>
<feature type="topological domain" description="Mitochondrial intermembrane" evidence="2">
    <location>
        <begin position="61"/>
        <end position="69"/>
    </location>
</feature>
<feature type="short sequence motif" description="SIFI-degron" evidence="2">
    <location>
        <begin position="2"/>
        <end position="19"/>
    </location>
</feature>
<proteinExistence type="inferred from homology"/>
<sequence>MSVLTPLLLRGLTGSARRLPVPRAKIHSLPPEEKLGIMELAVGLTSCFVTFLLPAGWILSHLETYRRPE</sequence>
<gene>
    <name type="primary">COX8A</name>
    <name type="synonym">COX8</name>
    <name type="synonym">COX8L</name>
</gene>
<organism>
    <name type="scientific">Pan troglodytes</name>
    <name type="common">Chimpanzee</name>
    <dbReference type="NCBI Taxonomy" id="9598"/>
    <lineage>
        <taxon>Eukaryota</taxon>
        <taxon>Metazoa</taxon>
        <taxon>Chordata</taxon>
        <taxon>Craniata</taxon>
        <taxon>Vertebrata</taxon>
        <taxon>Euteleostomi</taxon>
        <taxon>Mammalia</taxon>
        <taxon>Eutheria</taxon>
        <taxon>Euarchontoglires</taxon>
        <taxon>Primates</taxon>
        <taxon>Haplorrhini</taxon>
        <taxon>Catarrhini</taxon>
        <taxon>Hominidae</taxon>
        <taxon>Pan</taxon>
    </lineage>
</organism>
<evidence type="ECO:0000250" key="1">
    <source>
        <dbReference type="UniProtKB" id="P10175"/>
    </source>
</evidence>
<evidence type="ECO:0000250" key="2">
    <source>
        <dbReference type="UniProtKB" id="P10176"/>
    </source>
</evidence>
<evidence type="ECO:0000305" key="3"/>
<keyword id="KW-0472">Membrane</keyword>
<keyword id="KW-0496">Mitochondrion</keyword>
<keyword id="KW-0999">Mitochondrion inner membrane</keyword>
<keyword id="KW-1185">Reference proteome</keyword>
<keyword id="KW-0809">Transit peptide</keyword>
<keyword id="KW-0812">Transmembrane</keyword>
<keyword id="KW-1133">Transmembrane helix</keyword>
<keyword id="KW-0832">Ubl conjugation</keyword>
<reference key="1">
    <citation type="submission" date="2001-09" db="EMBL/GenBank/DDBJ databases">
        <title>EST sequence screening of cynomolgus monkey cDNAs to find genes positively selected between hominoid and old monkey lineages.</title>
        <authorList>
            <person name="Osada N."/>
            <person name="Kusuda J."/>
            <person name="Hirata M."/>
            <person name="Tanuma R."/>
            <person name="Hida M."/>
            <person name="Sugano S."/>
            <person name="Hirai M."/>
            <person name="Hashimoto K."/>
        </authorList>
    </citation>
    <scope>NUCLEOTIDE SEQUENCE [GENOMIC DNA]</scope>
</reference>
<comment type="function">
    <text evidence="1">Component of the cytochrome c oxidase, the last enzyme in the mitochondrial electron transport chain which drives oxidative phosphorylation. The respiratory chain contains 3 multisubunit complexes succinate dehydrogenase (complex II, CII), ubiquinol-cytochrome c oxidoreductase (cytochrome b-c1 complex, complex III, CIII) and cytochrome c oxidase (complex IV, CIV), that cooperate to transfer electrons derived from NADH and succinate to molecular oxygen, creating an electrochemical gradient over the inner membrane that drives transmembrane transport and the ATP synthase. Cytochrome c oxidase is the component of the respiratory chain that catalyzes the reduction of oxygen to water. Electrons originating from reduced cytochrome c in the intermembrane space (IMS) are transferred via the dinuclear copper A center (CU(A)) of subunit 2 and heme A of subunit 1 to the active site in subunit 1, a binuclear center (BNC) formed by heme A3 and copper B (CU(B)). The BNC reduces molecular oxygen to 2 water molecules using 4 electrons from cytochrome c in the IMS and 4 protons from the mitochondrial matrix.</text>
</comment>
<comment type="pathway">
    <text evidence="1">Energy metabolism; oxidative phosphorylation.</text>
</comment>
<comment type="subunit">
    <text evidence="2">Component of the cytochrome c oxidase (complex IV, CIV), a multisubunit enzyme composed of 14 subunits. The complex is composed of a catalytic core of 3 subunits MT-CO1, MT-CO2 and MT-CO3, encoded in the mitochondrial DNA, and 11 supernumerary subunits COX4I, COX5A, COX5B, COX6A, COX6B, COX6C, COX7A, COX7B, COX7C, COX8 and NDUFA4, which are encoded in the nuclear genome. The complex exists as a monomer or a dimer and forms supercomplexes (SCs) in the inner mitochondrial membrane with NADH-ubiquinone oxidoreductase (complex I, CI) and ubiquinol-cytochrome c oxidoreductase (cytochrome b-c1 complex, complex III, CIII), resulting in different assemblies (supercomplex SCI(1)III(2)IV(1) and megacomplex MCI(2)III(2)IV(2)).</text>
</comment>
<comment type="subcellular location">
    <subcellularLocation>
        <location evidence="2">Mitochondrion inner membrane</location>
        <topology evidence="2">Single-pass membrane protein</topology>
    </subcellularLocation>
</comment>
<comment type="PTM">
    <text evidence="2">In response to mitochondrial stress, the precursor protein is ubiquitinated by the SIFI complex in the cytoplasm before mitochondrial import, leading to its degradation. Within the SIFI complex, UBR4 initiates ubiquitin chain that are further elongated or branched by KCMF1.</text>
</comment>
<comment type="similarity">
    <text evidence="3">Belongs to the cytochrome c oxidase VIII family.</text>
</comment>